<dbReference type="EMBL" id="CP001186">
    <property type="protein sequence ID" value="ACK95466.1"/>
    <property type="molecule type" value="Genomic_DNA"/>
</dbReference>
<dbReference type="RefSeq" id="WP_000090792.1">
    <property type="nucleotide sequence ID" value="NC_011772.1"/>
</dbReference>
<dbReference type="SMR" id="B7IT44"/>
<dbReference type="GeneID" id="72446953"/>
<dbReference type="KEGG" id="bcg:BCG9842_B5170"/>
<dbReference type="HOGENOM" id="CLU_103849_1_1_9"/>
<dbReference type="Proteomes" id="UP000006744">
    <property type="component" value="Chromosome"/>
</dbReference>
<dbReference type="GO" id="GO:0005829">
    <property type="term" value="C:cytosol"/>
    <property type="evidence" value="ECO:0007669"/>
    <property type="project" value="TreeGrafter"/>
</dbReference>
<dbReference type="GO" id="GO:0015935">
    <property type="term" value="C:small ribosomal subunit"/>
    <property type="evidence" value="ECO:0007669"/>
    <property type="project" value="TreeGrafter"/>
</dbReference>
<dbReference type="GO" id="GO:0019843">
    <property type="term" value="F:rRNA binding"/>
    <property type="evidence" value="ECO:0007669"/>
    <property type="project" value="UniProtKB-UniRule"/>
</dbReference>
<dbReference type="GO" id="GO:0003735">
    <property type="term" value="F:structural constituent of ribosome"/>
    <property type="evidence" value="ECO:0007669"/>
    <property type="project" value="InterPro"/>
</dbReference>
<dbReference type="GO" id="GO:0000049">
    <property type="term" value="F:tRNA binding"/>
    <property type="evidence" value="ECO:0007669"/>
    <property type="project" value="UniProtKB-UniRule"/>
</dbReference>
<dbReference type="GO" id="GO:0006412">
    <property type="term" value="P:translation"/>
    <property type="evidence" value="ECO:0007669"/>
    <property type="project" value="UniProtKB-UniRule"/>
</dbReference>
<dbReference type="FunFam" id="1.10.8.50:FF:000001">
    <property type="entry name" value="30S ribosomal protein S13"/>
    <property type="match status" value="1"/>
</dbReference>
<dbReference type="FunFam" id="4.10.910.10:FF:000001">
    <property type="entry name" value="30S ribosomal protein S13"/>
    <property type="match status" value="1"/>
</dbReference>
<dbReference type="Gene3D" id="1.10.8.50">
    <property type="match status" value="1"/>
</dbReference>
<dbReference type="Gene3D" id="4.10.910.10">
    <property type="entry name" value="30s ribosomal protein s13, domain 2"/>
    <property type="match status" value="1"/>
</dbReference>
<dbReference type="HAMAP" id="MF_01315">
    <property type="entry name" value="Ribosomal_uS13"/>
    <property type="match status" value="1"/>
</dbReference>
<dbReference type="InterPro" id="IPR027437">
    <property type="entry name" value="Rbsml_uS13_C"/>
</dbReference>
<dbReference type="InterPro" id="IPR001892">
    <property type="entry name" value="Ribosomal_uS13"/>
</dbReference>
<dbReference type="InterPro" id="IPR010979">
    <property type="entry name" value="Ribosomal_uS13-like_H2TH"/>
</dbReference>
<dbReference type="InterPro" id="IPR019980">
    <property type="entry name" value="Ribosomal_uS13_bac-type"/>
</dbReference>
<dbReference type="InterPro" id="IPR018269">
    <property type="entry name" value="Ribosomal_uS13_CS"/>
</dbReference>
<dbReference type="NCBIfam" id="TIGR03631">
    <property type="entry name" value="uS13_bact"/>
    <property type="match status" value="1"/>
</dbReference>
<dbReference type="PANTHER" id="PTHR10871">
    <property type="entry name" value="30S RIBOSOMAL PROTEIN S13/40S RIBOSOMAL PROTEIN S18"/>
    <property type="match status" value="1"/>
</dbReference>
<dbReference type="PANTHER" id="PTHR10871:SF1">
    <property type="entry name" value="SMALL RIBOSOMAL SUBUNIT PROTEIN US13M"/>
    <property type="match status" value="1"/>
</dbReference>
<dbReference type="Pfam" id="PF00416">
    <property type="entry name" value="Ribosomal_S13"/>
    <property type="match status" value="1"/>
</dbReference>
<dbReference type="PIRSF" id="PIRSF002134">
    <property type="entry name" value="Ribosomal_S13"/>
    <property type="match status" value="1"/>
</dbReference>
<dbReference type="SUPFAM" id="SSF46946">
    <property type="entry name" value="S13-like H2TH domain"/>
    <property type="match status" value="1"/>
</dbReference>
<dbReference type="PROSITE" id="PS00646">
    <property type="entry name" value="RIBOSOMAL_S13_1"/>
    <property type="match status" value="1"/>
</dbReference>
<dbReference type="PROSITE" id="PS50159">
    <property type="entry name" value="RIBOSOMAL_S13_2"/>
    <property type="match status" value="1"/>
</dbReference>
<name>RS13_BACC2</name>
<accession>B7IT44</accession>
<evidence type="ECO:0000255" key="1">
    <source>
        <dbReference type="HAMAP-Rule" id="MF_01315"/>
    </source>
</evidence>
<evidence type="ECO:0000256" key="2">
    <source>
        <dbReference type="SAM" id="MobiDB-lite"/>
    </source>
</evidence>
<evidence type="ECO:0000305" key="3"/>
<keyword id="KW-0687">Ribonucleoprotein</keyword>
<keyword id="KW-0689">Ribosomal protein</keyword>
<keyword id="KW-0694">RNA-binding</keyword>
<keyword id="KW-0699">rRNA-binding</keyword>
<keyword id="KW-0820">tRNA-binding</keyword>
<proteinExistence type="inferred from homology"/>
<sequence>MARIAGVDIPRDKRVVISLTYVFGIGRTTAEKILTEAGISSETRVRDLTEDELGRIRDVIDRIKVEGDLRREVSLNIKRLMEIGSYRGLRHRRGLPVRGQNSKNNARTRKGPRRTVANKKK</sequence>
<comment type="function">
    <text evidence="1">Located at the top of the head of the 30S subunit, it contacts several helices of the 16S rRNA. In the 70S ribosome it contacts the 23S rRNA (bridge B1a) and protein L5 of the 50S subunit (bridge B1b), connecting the 2 subunits; these bridges are implicated in subunit movement. Contacts the tRNAs in the A and P-sites.</text>
</comment>
<comment type="subunit">
    <text evidence="1">Part of the 30S ribosomal subunit. Forms a loose heterodimer with protein S19. Forms two bridges to the 50S subunit in the 70S ribosome.</text>
</comment>
<comment type="similarity">
    <text evidence="1">Belongs to the universal ribosomal protein uS13 family.</text>
</comment>
<gene>
    <name evidence="1" type="primary">rpsM</name>
    <name type="ordered locus">BCG9842_B5170</name>
</gene>
<protein>
    <recommendedName>
        <fullName evidence="1">Small ribosomal subunit protein uS13</fullName>
    </recommendedName>
    <alternativeName>
        <fullName evidence="3">30S ribosomal protein S13</fullName>
    </alternativeName>
</protein>
<organism>
    <name type="scientific">Bacillus cereus (strain G9842)</name>
    <dbReference type="NCBI Taxonomy" id="405531"/>
    <lineage>
        <taxon>Bacteria</taxon>
        <taxon>Bacillati</taxon>
        <taxon>Bacillota</taxon>
        <taxon>Bacilli</taxon>
        <taxon>Bacillales</taxon>
        <taxon>Bacillaceae</taxon>
        <taxon>Bacillus</taxon>
        <taxon>Bacillus cereus group</taxon>
    </lineage>
</organism>
<reference key="1">
    <citation type="submission" date="2008-10" db="EMBL/GenBank/DDBJ databases">
        <title>Genome sequence of Bacillus cereus G9842.</title>
        <authorList>
            <person name="Dodson R.J."/>
            <person name="Durkin A.S."/>
            <person name="Rosovitz M.J."/>
            <person name="Rasko D.A."/>
            <person name="Hoffmaster A."/>
            <person name="Ravel J."/>
            <person name="Sutton G."/>
        </authorList>
    </citation>
    <scope>NUCLEOTIDE SEQUENCE [LARGE SCALE GENOMIC DNA]</scope>
    <source>
        <strain>G9842</strain>
    </source>
</reference>
<feature type="chain" id="PRO_1000141217" description="Small ribosomal subunit protein uS13">
    <location>
        <begin position="1"/>
        <end position="121"/>
    </location>
</feature>
<feature type="region of interest" description="Disordered" evidence="2">
    <location>
        <begin position="91"/>
        <end position="121"/>
    </location>
</feature>
<feature type="compositionally biased region" description="Basic residues" evidence="2">
    <location>
        <begin position="106"/>
        <end position="121"/>
    </location>
</feature>